<protein>
    <recommendedName>
        <fullName evidence="3">Small ribosomal subunit protein uS3c</fullName>
    </recommendedName>
    <alternativeName>
        <fullName>30S ribosomal protein S3, chloroplastic</fullName>
    </alternativeName>
</protein>
<comment type="subunit">
    <text evidence="1">Part of the 30S ribosomal subunit.</text>
</comment>
<comment type="subcellular location">
    <subcellularLocation>
        <location>Plastid</location>
        <location>Chloroplast</location>
    </subcellularLocation>
</comment>
<comment type="similarity">
    <text evidence="3">Belongs to the universal ribosomal protein uS3 family.</text>
</comment>
<accession>A1EA47</accession>
<keyword id="KW-0150">Chloroplast</keyword>
<keyword id="KW-0934">Plastid</keyword>
<keyword id="KW-0687">Ribonucleoprotein</keyword>
<keyword id="KW-0689">Ribosomal protein</keyword>
<keyword id="KW-0694">RNA-binding</keyword>
<keyword id="KW-0699">rRNA-binding</keyword>
<geneLocation type="chloroplast"/>
<sequence length="239" mass="27557">MGQKINPLGFRLGTTQKHHSFWFAQPKNYSEGLQEDKKIRNCIKNYIQKNRKKGSNRKIESDSSSEVITHNRKTDSGSSSEVITRIEIQKEIDTIHVIIHIGFPNLLKKKGAIEELEKDLQKEIHSVNQRLNISIEKVKEPYREPNILAEYIAFQLKNRVSFRKAMKKAIELTKKADIRGVKVKIAGRLGGKEIARAECIKKGRLPLQTIRAKIDYCCYPIRTIYGVLGVKIWIFVDEE</sequence>
<gene>
    <name type="primary">rps3</name>
</gene>
<name>RR3_AGRST</name>
<evidence type="ECO:0000250" key="1"/>
<evidence type="ECO:0000256" key="2">
    <source>
        <dbReference type="SAM" id="MobiDB-lite"/>
    </source>
</evidence>
<evidence type="ECO:0000305" key="3"/>
<feature type="chain" id="PRO_0000276985" description="Small ribosomal subunit protein uS3c">
    <location>
        <begin position="1"/>
        <end position="239"/>
    </location>
</feature>
<feature type="domain" description="KH type-2">
    <location>
        <begin position="43"/>
        <end position="139"/>
    </location>
</feature>
<feature type="region of interest" description="Disordered" evidence="2">
    <location>
        <begin position="50"/>
        <end position="80"/>
    </location>
</feature>
<organism>
    <name type="scientific">Agrostis stolonifera</name>
    <name type="common">Creeping bentgrass</name>
    <dbReference type="NCBI Taxonomy" id="63632"/>
    <lineage>
        <taxon>Eukaryota</taxon>
        <taxon>Viridiplantae</taxon>
        <taxon>Streptophyta</taxon>
        <taxon>Embryophyta</taxon>
        <taxon>Tracheophyta</taxon>
        <taxon>Spermatophyta</taxon>
        <taxon>Magnoliopsida</taxon>
        <taxon>Liliopsida</taxon>
        <taxon>Poales</taxon>
        <taxon>Poaceae</taxon>
        <taxon>BOP clade</taxon>
        <taxon>Pooideae</taxon>
        <taxon>Poodae</taxon>
        <taxon>Poeae</taxon>
        <taxon>Poeae Chloroplast Group 1 (Aveneae type)</taxon>
        <taxon>Agrostidodinae</taxon>
        <taxon>Agrostidinae</taxon>
        <taxon>Agrostis</taxon>
    </lineage>
</organism>
<reference key="1">
    <citation type="journal article" date="2007" name="Theor. Appl. Genet.">
        <title>Complete chloroplast genome sequences of Hordeum vulgare, Sorghum bicolor and Agrostis stolonifera, and comparative analyses with other grass genomes.</title>
        <authorList>
            <person name="Saski C."/>
            <person name="Lee S.-B."/>
            <person name="Fjellheim S."/>
            <person name="Guda C."/>
            <person name="Jansen R.K."/>
            <person name="Luo H."/>
            <person name="Tomkins J."/>
            <person name="Rognli O.A."/>
            <person name="Daniell H."/>
            <person name="Clarke J.L."/>
        </authorList>
    </citation>
    <scope>NUCLEOTIDE SEQUENCE [LARGE SCALE GENOMIC DNA]</scope>
    <source>
        <strain>cv. Penn A-4</strain>
    </source>
</reference>
<proteinExistence type="inferred from homology"/>
<dbReference type="EMBL" id="EF115543">
    <property type="protein sequence ID" value="ABK79618.1"/>
    <property type="molecule type" value="Genomic_DNA"/>
</dbReference>
<dbReference type="RefSeq" id="YP_874775.1">
    <property type="nucleotide sequence ID" value="NC_008591.1"/>
</dbReference>
<dbReference type="SMR" id="A1EA47"/>
<dbReference type="GeneID" id="4524948"/>
<dbReference type="GO" id="GO:0009507">
    <property type="term" value="C:chloroplast"/>
    <property type="evidence" value="ECO:0007669"/>
    <property type="project" value="UniProtKB-SubCell"/>
</dbReference>
<dbReference type="GO" id="GO:0022627">
    <property type="term" value="C:cytosolic small ribosomal subunit"/>
    <property type="evidence" value="ECO:0007669"/>
    <property type="project" value="TreeGrafter"/>
</dbReference>
<dbReference type="GO" id="GO:0019843">
    <property type="term" value="F:rRNA binding"/>
    <property type="evidence" value="ECO:0007669"/>
    <property type="project" value="UniProtKB-KW"/>
</dbReference>
<dbReference type="GO" id="GO:0003735">
    <property type="term" value="F:structural constituent of ribosome"/>
    <property type="evidence" value="ECO:0007669"/>
    <property type="project" value="InterPro"/>
</dbReference>
<dbReference type="GO" id="GO:0006412">
    <property type="term" value="P:translation"/>
    <property type="evidence" value="ECO:0007669"/>
    <property type="project" value="UniProtKB-UniRule"/>
</dbReference>
<dbReference type="CDD" id="cd02412">
    <property type="entry name" value="KH-II_30S_S3"/>
    <property type="match status" value="1"/>
</dbReference>
<dbReference type="FunFam" id="3.30.1140.32:FF:000003">
    <property type="entry name" value="30S ribosomal protein S3, chloroplastic"/>
    <property type="match status" value="1"/>
</dbReference>
<dbReference type="FunFam" id="3.30.300.20:FF:000008">
    <property type="entry name" value="30S ribosomal protein S3, chloroplastic"/>
    <property type="match status" value="1"/>
</dbReference>
<dbReference type="Gene3D" id="3.30.300.20">
    <property type="match status" value="1"/>
</dbReference>
<dbReference type="Gene3D" id="3.30.1140.32">
    <property type="entry name" value="Ribosomal protein S3, C-terminal domain"/>
    <property type="match status" value="1"/>
</dbReference>
<dbReference type="HAMAP" id="MF_01309_B">
    <property type="entry name" value="Ribosomal_uS3_B"/>
    <property type="match status" value="1"/>
</dbReference>
<dbReference type="InterPro" id="IPR015946">
    <property type="entry name" value="KH_dom-like_a/b"/>
</dbReference>
<dbReference type="InterPro" id="IPR009019">
    <property type="entry name" value="KH_sf_prok-type"/>
</dbReference>
<dbReference type="InterPro" id="IPR036419">
    <property type="entry name" value="Ribosomal_S3_C_sf"/>
</dbReference>
<dbReference type="InterPro" id="IPR005704">
    <property type="entry name" value="Ribosomal_uS3_bac-typ"/>
</dbReference>
<dbReference type="InterPro" id="IPR001351">
    <property type="entry name" value="Ribosomal_uS3_C"/>
</dbReference>
<dbReference type="InterPro" id="IPR018280">
    <property type="entry name" value="Ribosomal_uS3_CS"/>
</dbReference>
<dbReference type="NCBIfam" id="TIGR01009">
    <property type="entry name" value="rpsC_bact"/>
    <property type="match status" value="1"/>
</dbReference>
<dbReference type="PANTHER" id="PTHR11760">
    <property type="entry name" value="30S/40S RIBOSOMAL PROTEIN S3"/>
    <property type="match status" value="1"/>
</dbReference>
<dbReference type="PANTHER" id="PTHR11760:SF42">
    <property type="entry name" value="SMALL RIBOSOMAL SUBUNIT PROTEIN US3C"/>
    <property type="match status" value="1"/>
</dbReference>
<dbReference type="Pfam" id="PF00189">
    <property type="entry name" value="Ribosomal_S3_C"/>
    <property type="match status" value="1"/>
</dbReference>
<dbReference type="SUPFAM" id="SSF54814">
    <property type="entry name" value="Prokaryotic type KH domain (KH-domain type II)"/>
    <property type="match status" value="1"/>
</dbReference>
<dbReference type="SUPFAM" id="SSF54821">
    <property type="entry name" value="Ribosomal protein S3 C-terminal domain"/>
    <property type="match status" value="1"/>
</dbReference>
<dbReference type="PROSITE" id="PS00548">
    <property type="entry name" value="RIBOSOMAL_S3"/>
    <property type="match status" value="1"/>
</dbReference>